<organism>
    <name type="scientific">Treponema pallidum subsp. pallidum (strain SS14)</name>
    <dbReference type="NCBI Taxonomy" id="455434"/>
    <lineage>
        <taxon>Bacteria</taxon>
        <taxon>Pseudomonadati</taxon>
        <taxon>Spirochaetota</taxon>
        <taxon>Spirochaetia</taxon>
        <taxon>Spirochaetales</taxon>
        <taxon>Treponemataceae</taxon>
        <taxon>Treponema</taxon>
    </lineage>
</organism>
<proteinExistence type="inferred from homology"/>
<protein>
    <recommendedName>
        <fullName evidence="1">Small ribosomal subunit protein uS13</fullName>
    </recommendedName>
    <alternativeName>
        <fullName evidence="3">30S ribosomal protein S13</fullName>
    </alternativeName>
</protein>
<dbReference type="EMBL" id="CP000805">
    <property type="protein sequence ID" value="ACD70637.1"/>
    <property type="molecule type" value="Genomic_DNA"/>
</dbReference>
<dbReference type="RefSeq" id="WP_010881658.1">
    <property type="nucleotide sequence ID" value="NC_021508.1"/>
</dbReference>
<dbReference type="SMR" id="B2S2F8"/>
<dbReference type="GeneID" id="93875998"/>
<dbReference type="KEGG" id="tpp:TPASS_0210"/>
<dbReference type="PATRIC" id="fig|455434.6.peg.214"/>
<dbReference type="Proteomes" id="UP000001202">
    <property type="component" value="Chromosome"/>
</dbReference>
<dbReference type="GO" id="GO:0005829">
    <property type="term" value="C:cytosol"/>
    <property type="evidence" value="ECO:0007669"/>
    <property type="project" value="TreeGrafter"/>
</dbReference>
<dbReference type="GO" id="GO:0015935">
    <property type="term" value="C:small ribosomal subunit"/>
    <property type="evidence" value="ECO:0007669"/>
    <property type="project" value="TreeGrafter"/>
</dbReference>
<dbReference type="GO" id="GO:0019843">
    <property type="term" value="F:rRNA binding"/>
    <property type="evidence" value="ECO:0007669"/>
    <property type="project" value="UniProtKB-UniRule"/>
</dbReference>
<dbReference type="GO" id="GO:0003735">
    <property type="term" value="F:structural constituent of ribosome"/>
    <property type="evidence" value="ECO:0007669"/>
    <property type="project" value="InterPro"/>
</dbReference>
<dbReference type="GO" id="GO:0000049">
    <property type="term" value="F:tRNA binding"/>
    <property type="evidence" value="ECO:0007669"/>
    <property type="project" value="UniProtKB-UniRule"/>
</dbReference>
<dbReference type="GO" id="GO:0006412">
    <property type="term" value="P:translation"/>
    <property type="evidence" value="ECO:0007669"/>
    <property type="project" value="UniProtKB-UniRule"/>
</dbReference>
<dbReference type="FunFam" id="1.10.8.50:FF:000001">
    <property type="entry name" value="30S ribosomal protein S13"/>
    <property type="match status" value="1"/>
</dbReference>
<dbReference type="FunFam" id="4.10.910.10:FF:000001">
    <property type="entry name" value="30S ribosomal protein S13"/>
    <property type="match status" value="1"/>
</dbReference>
<dbReference type="Gene3D" id="1.10.8.50">
    <property type="match status" value="1"/>
</dbReference>
<dbReference type="Gene3D" id="4.10.910.10">
    <property type="entry name" value="30s ribosomal protein s13, domain 2"/>
    <property type="match status" value="1"/>
</dbReference>
<dbReference type="HAMAP" id="MF_01315">
    <property type="entry name" value="Ribosomal_uS13"/>
    <property type="match status" value="1"/>
</dbReference>
<dbReference type="InterPro" id="IPR027437">
    <property type="entry name" value="Rbsml_uS13_C"/>
</dbReference>
<dbReference type="InterPro" id="IPR001892">
    <property type="entry name" value="Ribosomal_uS13"/>
</dbReference>
<dbReference type="InterPro" id="IPR010979">
    <property type="entry name" value="Ribosomal_uS13-like_H2TH"/>
</dbReference>
<dbReference type="InterPro" id="IPR019980">
    <property type="entry name" value="Ribosomal_uS13_bac-type"/>
</dbReference>
<dbReference type="InterPro" id="IPR018269">
    <property type="entry name" value="Ribosomal_uS13_CS"/>
</dbReference>
<dbReference type="NCBIfam" id="TIGR03631">
    <property type="entry name" value="uS13_bact"/>
    <property type="match status" value="1"/>
</dbReference>
<dbReference type="PANTHER" id="PTHR10871">
    <property type="entry name" value="30S RIBOSOMAL PROTEIN S13/40S RIBOSOMAL PROTEIN S18"/>
    <property type="match status" value="1"/>
</dbReference>
<dbReference type="PANTHER" id="PTHR10871:SF1">
    <property type="entry name" value="SMALL RIBOSOMAL SUBUNIT PROTEIN US13M"/>
    <property type="match status" value="1"/>
</dbReference>
<dbReference type="Pfam" id="PF00416">
    <property type="entry name" value="Ribosomal_S13"/>
    <property type="match status" value="1"/>
</dbReference>
<dbReference type="PIRSF" id="PIRSF002134">
    <property type="entry name" value="Ribosomal_S13"/>
    <property type="match status" value="1"/>
</dbReference>
<dbReference type="SUPFAM" id="SSF46946">
    <property type="entry name" value="S13-like H2TH domain"/>
    <property type="match status" value="1"/>
</dbReference>
<dbReference type="PROSITE" id="PS00646">
    <property type="entry name" value="RIBOSOMAL_S13_1"/>
    <property type="match status" value="1"/>
</dbReference>
<dbReference type="PROSITE" id="PS50159">
    <property type="entry name" value="RIBOSOMAL_S13_2"/>
    <property type="match status" value="1"/>
</dbReference>
<evidence type="ECO:0000255" key="1">
    <source>
        <dbReference type="HAMAP-Rule" id="MF_01315"/>
    </source>
</evidence>
<evidence type="ECO:0000256" key="2">
    <source>
        <dbReference type="SAM" id="MobiDB-lite"/>
    </source>
</evidence>
<evidence type="ECO:0000305" key="3"/>
<name>RS13_TREPS</name>
<comment type="function">
    <text evidence="1">Located at the top of the head of the 30S subunit, it contacts several helices of the 16S rRNA. In the 70S ribosome it contacts the 23S rRNA (bridge B1a) and protein L5 of the 50S subunit (bridge B1b), connecting the 2 subunits; these bridges are implicated in subunit movement. Contacts the tRNAs in the A and P-sites.</text>
</comment>
<comment type="subunit">
    <text evidence="1">Part of the 30S ribosomal subunit. Forms a loose heterodimer with protein S19. Forms two bridges to the 50S subunit in the 70S ribosome.</text>
</comment>
<comment type="similarity">
    <text evidence="1">Belongs to the universal ribosomal protein uS13 family.</text>
</comment>
<accession>B2S2F8</accession>
<reference key="1">
    <citation type="journal article" date="2008" name="BMC Microbiol.">
        <title>Complete genome sequence of Treponema pallidum ssp. pallidum strain SS14 determined with oligonucleotide arrays.</title>
        <authorList>
            <person name="Matejkova P."/>
            <person name="Strouhal M."/>
            <person name="Smajs D."/>
            <person name="Norris S.J."/>
            <person name="Palzkill T."/>
            <person name="Petrosino J.F."/>
            <person name="Sodergren E."/>
            <person name="Norton J.E."/>
            <person name="Singh J."/>
            <person name="Richmond T.A."/>
            <person name="Molla M.N."/>
            <person name="Albert T.J."/>
            <person name="Weinstock G.M."/>
        </authorList>
    </citation>
    <scope>NUCLEOTIDE SEQUENCE [LARGE SCALE GENOMIC DNA]</scope>
    <source>
        <strain>SS14</strain>
    </source>
</reference>
<gene>
    <name evidence="1" type="primary">rpsM</name>
    <name type="ordered locus">TPASS_0210</name>
</gene>
<sequence length="121" mass="13634">MARIAGVDLPNKHVSVALTYIYGISRSSARTICEKARISSACLINDLSQDELAVVRAIIDREYKVEGRLRTEVALNIKRLMDIGCYRGLRHRKGLPVRGQRTRTNARTRKGKRKTVAGKKK</sequence>
<keyword id="KW-0687">Ribonucleoprotein</keyword>
<keyword id="KW-0689">Ribosomal protein</keyword>
<keyword id="KW-0694">RNA-binding</keyword>
<keyword id="KW-0699">rRNA-binding</keyword>
<keyword id="KW-0820">tRNA-binding</keyword>
<feature type="chain" id="PRO_1000141325" description="Small ribosomal subunit protein uS13">
    <location>
        <begin position="1"/>
        <end position="121"/>
    </location>
</feature>
<feature type="region of interest" description="Disordered" evidence="2">
    <location>
        <begin position="94"/>
        <end position="121"/>
    </location>
</feature>